<gene>
    <name type="primary">PIGM</name>
    <name type="ORF">Tb927.6.3300</name>
</gene>
<feature type="chain" id="PRO_0000246221" description="GPI mannosyltransferase 1">
    <location>
        <begin position="1"/>
        <end position="430"/>
    </location>
</feature>
<feature type="topological domain" description="Cytoplasmic" evidence="2">
    <location>
        <begin position="1"/>
        <end position="11"/>
    </location>
</feature>
<feature type="transmembrane region" description="Helical" evidence="2">
    <location>
        <begin position="12"/>
        <end position="32"/>
    </location>
</feature>
<feature type="topological domain" description="Lumenal" evidence="2">
    <location>
        <begin position="33"/>
        <end position="72"/>
    </location>
</feature>
<feature type="transmembrane region" description="Helical" evidence="2">
    <location>
        <begin position="73"/>
        <end position="93"/>
    </location>
</feature>
<feature type="topological domain" description="Cytoplasmic" evidence="2">
    <location>
        <begin position="94"/>
        <end position="115"/>
    </location>
</feature>
<feature type="transmembrane region" description="Helical" evidence="2">
    <location>
        <begin position="116"/>
        <end position="136"/>
    </location>
</feature>
<feature type="topological domain" description="Lumenal" evidence="2">
    <location>
        <begin position="137"/>
        <end position="163"/>
    </location>
</feature>
<feature type="transmembrane region" description="Helical" evidence="2">
    <location>
        <begin position="164"/>
        <end position="184"/>
    </location>
</feature>
<feature type="topological domain" description="Cytoplasmic" evidence="2">
    <location>
        <begin position="185"/>
        <end position="206"/>
    </location>
</feature>
<feature type="transmembrane region" description="Helical" evidence="2">
    <location>
        <begin position="207"/>
        <end position="227"/>
    </location>
</feature>
<feature type="topological domain" description="Lumenal" evidence="2">
    <location>
        <begin position="228"/>
        <end position="360"/>
    </location>
</feature>
<feature type="transmembrane region" description="Helical" evidence="2">
    <location>
        <begin position="361"/>
        <end position="381"/>
    </location>
</feature>
<feature type="topological domain" description="Cytoplasmic" evidence="2">
    <location>
        <begin position="382"/>
        <end position="388"/>
    </location>
</feature>
<feature type="transmembrane region" description="Helical" evidence="2">
    <location>
        <begin position="389"/>
        <end position="409"/>
    </location>
</feature>
<feature type="topological domain" description="Lumenal" evidence="2">
    <location>
        <begin position="410"/>
        <end position="430"/>
    </location>
</feature>
<feature type="sequence conflict" description="In Ref. 1; BAB20994." evidence="3" ref="1">
    <original>A</original>
    <variation>V</variation>
    <location>
        <position position="284"/>
    </location>
</feature>
<feature type="sequence conflict" description="In Ref. 1; BAB20994." evidence="3" ref="1">
    <original>Q</original>
    <variation>K</variation>
    <location>
        <position position="391"/>
    </location>
</feature>
<name>PIGM_TRYB2</name>
<reference key="1">
    <citation type="journal article" date="2001" name="EMBO J.">
        <title>PIG-M transfers the first mannose to glycosylphosphatidylinositol on the lumenal side of the ER.</title>
        <authorList>
            <person name="Maeda Y."/>
            <person name="Watanabe R."/>
            <person name="Harris C.L."/>
            <person name="Hong Y."/>
            <person name="Ohishi K."/>
            <person name="Kinoshita K."/>
            <person name="Kinoshita T."/>
        </authorList>
    </citation>
    <scope>NUCLEOTIDE SEQUENCE [MRNA]</scope>
</reference>
<reference key="2">
    <citation type="journal article" date="2005" name="Science">
        <title>The genome of the African trypanosome Trypanosoma brucei.</title>
        <authorList>
            <person name="Berriman M."/>
            <person name="Ghedin E."/>
            <person name="Hertz-Fowler C."/>
            <person name="Blandin G."/>
            <person name="Renauld H."/>
            <person name="Bartholomeu D.C."/>
            <person name="Lennard N.J."/>
            <person name="Caler E."/>
            <person name="Hamlin N.E."/>
            <person name="Haas B."/>
            <person name="Bohme U."/>
            <person name="Hannick L."/>
            <person name="Aslett M.A."/>
            <person name="Shallom J."/>
            <person name="Marcello L."/>
            <person name="Hou L."/>
            <person name="Wickstead B."/>
            <person name="Alsmark U.C.M."/>
            <person name="Arrowsmith C."/>
            <person name="Atkin R.J."/>
            <person name="Barron A.J."/>
            <person name="Bringaud F."/>
            <person name="Brooks K."/>
            <person name="Carrington M."/>
            <person name="Cherevach I."/>
            <person name="Chillingworth T.J."/>
            <person name="Churcher C."/>
            <person name="Clark L.N."/>
            <person name="Corton C.H."/>
            <person name="Cronin A."/>
            <person name="Davies R.M."/>
            <person name="Doggett J."/>
            <person name="Djikeng A."/>
            <person name="Feldblyum T."/>
            <person name="Field M.C."/>
            <person name="Fraser A."/>
            <person name="Goodhead I."/>
            <person name="Hance Z."/>
            <person name="Harper D."/>
            <person name="Harris B.R."/>
            <person name="Hauser H."/>
            <person name="Hostetler J."/>
            <person name="Ivens A."/>
            <person name="Jagels K."/>
            <person name="Johnson D."/>
            <person name="Johnson J."/>
            <person name="Jones K."/>
            <person name="Kerhornou A.X."/>
            <person name="Koo H."/>
            <person name="Larke N."/>
            <person name="Landfear S."/>
            <person name="Larkin C."/>
            <person name="Leech V."/>
            <person name="Line A."/>
            <person name="Lord A."/>
            <person name="Macleod A."/>
            <person name="Mooney P.J."/>
            <person name="Moule S."/>
            <person name="Martin D.M."/>
            <person name="Morgan G.W."/>
            <person name="Mungall K."/>
            <person name="Norbertczak H."/>
            <person name="Ormond D."/>
            <person name="Pai G."/>
            <person name="Peacock C.S."/>
            <person name="Peterson J."/>
            <person name="Quail M.A."/>
            <person name="Rabbinowitsch E."/>
            <person name="Rajandream M.A."/>
            <person name="Reitter C."/>
            <person name="Salzberg S.L."/>
            <person name="Sanders M."/>
            <person name="Schobel S."/>
            <person name="Sharp S."/>
            <person name="Simmonds M."/>
            <person name="Simpson A.J."/>
            <person name="Tallon L."/>
            <person name="Turner C.M."/>
            <person name="Tait A."/>
            <person name="Tivey A.R."/>
            <person name="Van Aken S."/>
            <person name="Walker D."/>
            <person name="Wanless D."/>
            <person name="Wang S."/>
            <person name="White B."/>
            <person name="White O."/>
            <person name="Whitehead S."/>
            <person name="Woodward J."/>
            <person name="Wortman J."/>
            <person name="Adams M.D."/>
            <person name="Embley T.M."/>
            <person name="Gull K."/>
            <person name="Ullu E."/>
            <person name="Barry J.D."/>
            <person name="Fairlamb A.H."/>
            <person name="Opperdoes F."/>
            <person name="Barrell B.G."/>
            <person name="Donelson J.E."/>
            <person name="Hall N."/>
            <person name="Fraser C.M."/>
            <person name="Melville S.E."/>
            <person name="El-Sayed N.M.A."/>
        </authorList>
    </citation>
    <scope>NUCLEOTIDE SEQUENCE [LARGE SCALE GENOMIC DNA]</scope>
    <source>
        <strain evidence="4">927/4 GUTat10.1</strain>
    </source>
</reference>
<sequence>MELQSLIDTVSLQKLLLLGALLRLILIAYAFFHDQWFRVKYTDIDYMIVVDGARHMWNGGSPFDRTTFRYTPLLAALVMPSIWIANPMGKLIFASSDLGAAWYCYGVLKSFAKERSAKWMVSLFILFNPIVLSVSTRGNSDMLVTFMSLMVLSKFARRKCYQAAAVLGFAVHFKIYPIIYALPLTLGVWEQSVAASTNTWRRVVKTAVVVSICALMAAISFAVPTVLCYMKYGQQYLNEAFIYHVYREDHRHNFSPYWLLMYLNMARRHLGQGVDFSPRLVAFAPQAVVLSFVSYKLRRNTAHACCVQTVLFVAFNKVCTVQYFVWFIPFLAFLFCEPKEVEDDESGGSGAFKFFSWVKALGVVLMWAATIPLWVTTAVPLEFHGYSDFAQLWIVSCLFFLAMVVLASMLARIAYRVQCTKCSAKSIKVA</sequence>
<keyword id="KW-0256">Endoplasmic reticulum</keyword>
<keyword id="KW-0328">Glycosyltransferase</keyword>
<keyword id="KW-0337">GPI-anchor biosynthesis</keyword>
<keyword id="KW-0472">Membrane</keyword>
<keyword id="KW-1185">Reference proteome</keyword>
<keyword id="KW-0808">Transferase</keyword>
<keyword id="KW-0812">Transmembrane</keyword>
<keyword id="KW-1133">Transmembrane helix</keyword>
<accession>Q9BPQ5</accession>
<accession>Q584X3</accession>
<dbReference type="EC" id="2.4.1.-"/>
<dbReference type="EMBL" id="AB050105">
    <property type="protein sequence ID" value="BAB20994.1"/>
    <property type="molecule type" value="mRNA"/>
</dbReference>
<dbReference type="EMBL" id="AC074258">
    <property type="protein sequence ID" value="AAX79949.1"/>
    <property type="molecule type" value="Genomic_DNA"/>
</dbReference>
<dbReference type="RefSeq" id="XP_845451.1">
    <property type="nucleotide sequence ID" value="XM_840358.1"/>
</dbReference>
<dbReference type="SMR" id="Q9BPQ5"/>
<dbReference type="FunCoup" id="Q9BPQ5">
    <property type="interactions" value="191"/>
</dbReference>
<dbReference type="STRING" id="185431.Q9BPQ5"/>
<dbReference type="CAZy" id="GT50">
    <property type="family name" value="Glycosyltransferase Family 50"/>
</dbReference>
<dbReference type="PaxDb" id="5691-AAZ11892"/>
<dbReference type="GeneID" id="3657966"/>
<dbReference type="KEGG" id="tbr:Tb927.6.3300"/>
<dbReference type="VEuPathDB" id="TriTrypDB:Tb927.6.3300"/>
<dbReference type="eggNOG" id="KOG3893">
    <property type="taxonomic scope" value="Eukaryota"/>
</dbReference>
<dbReference type="InParanoid" id="Q9BPQ5"/>
<dbReference type="OMA" id="LINCWIL"/>
<dbReference type="OrthoDB" id="1741594at2759"/>
<dbReference type="UniPathway" id="UPA00196"/>
<dbReference type="Proteomes" id="UP000008524">
    <property type="component" value="Chromosome 6"/>
</dbReference>
<dbReference type="GO" id="GO:0005737">
    <property type="term" value="C:cytoplasm"/>
    <property type="evidence" value="ECO:0000314"/>
    <property type="project" value="GeneDB"/>
</dbReference>
<dbReference type="GO" id="GO:0005789">
    <property type="term" value="C:endoplasmic reticulum membrane"/>
    <property type="evidence" value="ECO:0007669"/>
    <property type="project" value="UniProtKB-SubCell"/>
</dbReference>
<dbReference type="GO" id="GO:1990529">
    <property type="term" value="C:glycosylphosphatidylinositol-mannosyltransferase I complex"/>
    <property type="evidence" value="ECO:0000318"/>
    <property type="project" value="GO_Central"/>
</dbReference>
<dbReference type="GO" id="GO:0005635">
    <property type="term" value="C:nuclear envelope"/>
    <property type="evidence" value="ECO:0000314"/>
    <property type="project" value="GeneDB"/>
</dbReference>
<dbReference type="GO" id="GO:0051751">
    <property type="term" value="F:alpha-1,4-mannosyltransferase activity"/>
    <property type="evidence" value="ECO:0007669"/>
    <property type="project" value="InterPro"/>
</dbReference>
<dbReference type="GO" id="GO:0004376">
    <property type="term" value="F:glycolipid mannosyltransferase activity"/>
    <property type="evidence" value="ECO:0007669"/>
    <property type="project" value="InterPro"/>
</dbReference>
<dbReference type="GO" id="GO:0000030">
    <property type="term" value="F:mannosyltransferase activity"/>
    <property type="evidence" value="ECO:0000318"/>
    <property type="project" value="GO_Central"/>
</dbReference>
<dbReference type="GO" id="GO:0006506">
    <property type="term" value="P:GPI anchor biosynthetic process"/>
    <property type="evidence" value="ECO:0000318"/>
    <property type="project" value="GO_Central"/>
</dbReference>
<dbReference type="InterPro" id="IPR007704">
    <property type="entry name" value="PIG-M"/>
</dbReference>
<dbReference type="PANTHER" id="PTHR12886:SF0">
    <property type="entry name" value="GPI MANNOSYLTRANSFERASE 1"/>
    <property type="match status" value="1"/>
</dbReference>
<dbReference type="PANTHER" id="PTHR12886">
    <property type="entry name" value="PIG-M MANNOSYLTRANSFERASE"/>
    <property type="match status" value="1"/>
</dbReference>
<dbReference type="Pfam" id="PF05007">
    <property type="entry name" value="Mannosyl_trans"/>
    <property type="match status" value="1"/>
</dbReference>
<evidence type="ECO:0000250" key="1"/>
<evidence type="ECO:0000255" key="2"/>
<evidence type="ECO:0000305" key="3"/>
<evidence type="ECO:0000312" key="4">
    <source>
        <dbReference type="Proteomes" id="UP000008524"/>
    </source>
</evidence>
<comment type="function">
    <text evidence="1">Mannosyltransferase involved in glycosylphosphatidylinositol-anchor biosynthesis. Transfers the first alpha-1,4-mannose to GlcN-PI during GPI precursor assembly (By similarity).</text>
</comment>
<comment type="pathway">
    <text>Glycolipid biosynthesis; glycosylphosphatidylinositol-anchor biosynthesis.</text>
</comment>
<comment type="subcellular location">
    <subcellularLocation>
        <location evidence="1">Endoplasmic reticulum membrane</location>
        <topology evidence="1">Multi-pass membrane protein</topology>
    </subcellularLocation>
</comment>
<comment type="miscellaneous">
    <text>In T.brucei, PIGM has a different substrate specificity compared to mammalian. Given that the protozoan parasite evades the immune response of mammalian hosts and digestion in the gut of the insect vector by means of its coat proteins tethered to the cell surface via GPI-anchors, it may be a good candidate for chemotherapy against African trypanosomiasis.</text>
</comment>
<comment type="similarity">
    <text evidence="3">Belongs to the PIGM family.</text>
</comment>
<proteinExistence type="evidence at transcript level"/>
<organism>
    <name type="scientific">Trypanosoma brucei brucei (strain 927/4 GUTat10.1)</name>
    <dbReference type="NCBI Taxonomy" id="185431"/>
    <lineage>
        <taxon>Eukaryota</taxon>
        <taxon>Discoba</taxon>
        <taxon>Euglenozoa</taxon>
        <taxon>Kinetoplastea</taxon>
        <taxon>Metakinetoplastina</taxon>
        <taxon>Trypanosomatida</taxon>
        <taxon>Trypanosomatidae</taxon>
        <taxon>Trypanosoma</taxon>
    </lineage>
</organism>
<protein>
    <recommendedName>
        <fullName>GPI mannosyltransferase 1</fullName>
        <ecNumber>2.4.1.-</ecNumber>
    </recommendedName>
    <alternativeName>
        <fullName>GPI mannosyltransferase I</fullName>
        <shortName>GPI-MT-I</shortName>
    </alternativeName>
    <alternativeName>
        <fullName>Phosphatidylinositol-glycan biosynthesis class M protein</fullName>
        <shortName>PIG-M</shortName>
    </alternativeName>
    <alternativeName>
        <fullName>TbPIG-M</fullName>
    </alternativeName>
</protein>